<evidence type="ECO:0000255" key="1">
    <source>
        <dbReference type="HAMAP-Rule" id="MF_00198"/>
    </source>
</evidence>
<comment type="function">
    <text evidence="1">Catalyzes the irreversible transfer of a propylamine group from the amino donor S-adenosylmethioninamine (decarboxy-AdoMet) to putrescine (1,4-diaminobutane) to yield spermidine.</text>
</comment>
<comment type="catalytic activity">
    <reaction evidence="1">
        <text>S-adenosyl 3-(methylsulfanyl)propylamine + putrescine = S-methyl-5'-thioadenosine + spermidine + H(+)</text>
        <dbReference type="Rhea" id="RHEA:12721"/>
        <dbReference type="ChEBI" id="CHEBI:15378"/>
        <dbReference type="ChEBI" id="CHEBI:17509"/>
        <dbReference type="ChEBI" id="CHEBI:57443"/>
        <dbReference type="ChEBI" id="CHEBI:57834"/>
        <dbReference type="ChEBI" id="CHEBI:326268"/>
        <dbReference type="EC" id="2.5.1.16"/>
    </reaction>
</comment>
<comment type="pathway">
    <text evidence="1">Amine and polyamine biosynthesis; spermidine biosynthesis; spermidine from putrescine: step 1/1.</text>
</comment>
<comment type="subunit">
    <text evidence="1">Homodimer or homotetramer.</text>
</comment>
<comment type="subcellular location">
    <subcellularLocation>
        <location evidence="1">Cytoplasm</location>
    </subcellularLocation>
</comment>
<comment type="similarity">
    <text evidence="1">Belongs to the spermidine/spermine synthase family.</text>
</comment>
<dbReference type="EC" id="2.5.1.16" evidence="1"/>
<dbReference type="EMBL" id="CP001107">
    <property type="protein sequence ID" value="ACR77070.1"/>
    <property type="molecule type" value="Genomic_DNA"/>
</dbReference>
<dbReference type="RefSeq" id="WP_012744095.1">
    <property type="nucleotide sequence ID" value="NC_012781.1"/>
</dbReference>
<dbReference type="SMR" id="C4ZDU4"/>
<dbReference type="STRING" id="515619.EUBREC_3344"/>
<dbReference type="PaxDb" id="515619-EUBREC_3344"/>
<dbReference type="GeneID" id="86989996"/>
<dbReference type="KEGG" id="ere:EUBREC_3344"/>
<dbReference type="HOGENOM" id="CLU_048199_0_0_9"/>
<dbReference type="UniPathway" id="UPA00248">
    <property type="reaction ID" value="UER00314"/>
</dbReference>
<dbReference type="Proteomes" id="UP000001477">
    <property type="component" value="Chromosome"/>
</dbReference>
<dbReference type="GO" id="GO:0005829">
    <property type="term" value="C:cytosol"/>
    <property type="evidence" value="ECO:0007669"/>
    <property type="project" value="TreeGrafter"/>
</dbReference>
<dbReference type="GO" id="GO:0004766">
    <property type="term" value="F:spermidine synthase activity"/>
    <property type="evidence" value="ECO:0007669"/>
    <property type="project" value="UniProtKB-UniRule"/>
</dbReference>
<dbReference type="GO" id="GO:0008295">
    <property type="term" value="P:spermidine biosynthetic process"/>
    <property type="evidence" value="ECO:0007669"/>
    <property type="project" value="UniProtKB-UniRule"/>
</dbReference>
<dbReference type="Gene3D" id="2.30.140.10">
    <property type="entry name" value="Spermidine synthase, tetramerisation domain"/>
    <property type="match status" value="1"/>
</dbReference>
<dbReference type="Gene3D" id="3.40.50.150">
    <property type="entry name" value="Vaccinia Virus protein VP39"/>
    <property type="match status" value="1"/>
</dbReference>
<dbReference type="HAMAP" id="MF_00198">
    <property type="entry name" value="Spermidine_synth"/>
    <property type="match status" value="1"/>
</dbReference>
<dbReference type="InterPro" id="IPR030374">
    <property type="entry name" value="PABS"/>
</dbReference>
<dbReference type="InterPro" id="IPR030373">
    <property type="entry name" value="PABS_CS"/>
</dbReference>
<dbReference type="InterPro" id="IPR029063">
    <property type="entry name" value="SAM-dependent_MTases_sf"/>
</dbReference>
<dbReference type="InterPro" id="IPR001045">
    <property type="entry name" value="Spermi_synthase"/>
</dbReference>
<dbReference type="InterPro" id="IPR035246">
    <property type="entry name" value="Spermidine_synt_N"/>
</dbReference>
<dbReference type="InterPro" id="IPR037163">
    <property type="entry name" value="Spermidine_synt_N_sf"/>
</dbReference>
<dbReference type="NCBIfam" id="NF002010">
    <property type="entry name" value="PRK00811.1"/>
    <property type="match status" value="1"/>
</dbReference>
<dbReference type="NCBIfam" id="TIGR00417">
    <property type="entry name" value="speE"/>
    <property type="match status" value="1"/>
</dbReference>
<dbReference type="PANTHER" id="PTHR11558:SF11">
    <property type="entry name" value="SPERMIDINE SYNTHASE"/>
    <property type="match status" value="1"/>
</dbReference>
<dbReference type="PANTHER" id="PTHR11558">
    <property type="entry name" value="SPERMIDINE/SPERMINE SYNTHASE"/>
    <property type="match status" value="1"/>
</dbReference>
<dbReference type="Pfam" id="PF17284">
    <property type="entry name" value="Spermine_synt_N"/>
    <property type="match status" value="1"/>
</dbReference>
<dbReference type="Pfam" id="PF01564">
    <property type="entry name" value="Spermine_synth"/>
    <property type="match status" value="1"/>
</dbReference>
<dbReference type="SUPFAM" id="SSF53335">
    <property type="entry name" value="S-adenosyl-L-methionine-dependent methyltransferases"/>
    <property type="match status" value="1"/>
</dbReference>
<dbReference type="PROSITE" id="PS01330">
    <property type="entry name" value="PABS_1"/>
    <property type="match status" value="1"/>
</dbReference>
<dbReference type="PROSITE" id="PS51006">
    <property type="entry name" value="PABS_2"/>
    <property type="match status" value="1"/>
</dbReference>
<sequence>MQMWFSQYHTVNVKLDVRIQEQLFSGQSDYQKIDVFKSYEFGKMVALDGEIVFSDTDEFIYDEMVTHVPMAVHPNAKRILIIGGGDGGVAKELIKYPSVEHIDVVETDKMFVDVCRRFFPEVACGLEDERISMFYDDGLRFLRRKHDEYDLIINDSTDPLGHTEGLFTKEFYGSCYKALKDDGIMVYQHGSPFYDEDELECRKMHRKVYKSFPISRVYQAHIPTCPSGYWLFGFASKKYHPLYDLDAKRWDELGLKTWYYTTHLHRGAFMLPKYVEDLLEEEETK</sequence>
<name>SPEE_AGARV</name>
<keyword id="KW-0963">Cytoplasm</keyword>
<keyword id="KW-0620">Polyamine biosynthesis</keyword>
<keyword id="KW-0745">Spermidine biosynthesis</keyword>
<keyword id="KW-0808">Transferase</keyword>
<protein>
    <recommendedName>
        <fullName evidence="1">Polyamine aminopropyltransferase</fullName>
    </recommendedName>
    <alternativeName>
        <fullName evidence="1">Putrescine aminopropyltransferase</fullName>
        <shortName evidence="1">PAPT</shortName>
    </alternativeName>
    <alternativeName>
        <fullName evidence="1">Spermidine synthase</fullName>
        <shortName evidence="1">SPDS</shortName>
        <shortName evidence="1">SPDSY</shortName>
        <ecNumber evidence="1">2.5.1.16</ecNumber>
    </alternativeName>
</protein>
<reference key="1">
    <citation type="journal article" date="2009" name="Proc. Natl. Acad. Sci. U.S.A.">
        <title>Characterizing a model human gut microbiota composed of members of its two dominant bacterial phyla.</title>
        <authorList>
            <person name="Mahowald M.A."/>
            <person name="Rey F.E."/>
            <person name="Seedorf H."/>
            <person name="Turnbaugh P.J."/>
            <person name="Fulton R.S."/>
            <person name="Wollam A."/>
            <person name="Shah N."/>
            <person name="Wang C."/>
            <person name="Magrini V."/>
            <person name="Wilson R.K."/>
            <person name="Cantarel B.L."/>
            <person name="Coutinho P.M."/>
            <person name="Henrissat B."/>
            <person name="Crock L.W."/>
            <person name="Russell A."/>
            <person name="Verberkmoes N.C."/>
            <person name="Hettich R.L."/>
            <person name="Gordon J.I."/>
        </authorList>
    </citation>
    <scope>NUCLEOTIDE SEQUENCE [LARGE SCALE GENOMIC DNA]</scope>
    <source>
        <strain>ATCC 33656 / DSM 3377 / JCM 17463 / KCTC 5835 / LMG 30912 / VPI 0990</strain>
    </source>
</reference>
<accession>C4ZDU4</accession>
<gene>
    <name evidence="1" type="primary">speE</name>
    <name type="ordered locus">EUBREC_3344</name>
</gene>
<organism>
    <name type="scientific">Agathobacter rectalis (strain ATCC 33656 / DSM 3377 / JCM 17463 / KCTC 5835 / VPI 0990)</name>
    <name type="common">Eubacterium rectale</name>
    <dbReference type="NCBI Taxonomy" id="515619"/>
    <lineage>
        <taxon>Bacteria</taxon>
        <taxon>Bacillati</taxon>
        <taxon>Bacillota</taxon>
        <taxon>Clostridia</taxon>
        <taxon>Lachnospirales</taxon>
        <taxon>Lachnospiraceae</taxon>
        <taxon>Agathobacter</taxon>
    </lineage>
</organism>
<proteinExistence type="inferred from homology"/>
<feature type="chain" id="PRO_1000204074" description="Polyamine aminopropyltransferase">
    <location>
        <begin position="1"/>
        <end position="285"/>
    </location>
</feature>
<feature type="domain" description="PABS" evidence="1">
    <location>
        <begin position="2"/>
        <end position="237"/>
    </location>
</feature>
<feature type="active site" description="Proton acceptor" evidence="1">
    <location>
        <position position="155"/>
    </location>
</feature>
<feature type="binding site" evidence="1">
    <location>
        <position position="31"/>
    </location>
    <ligand>
        <name>S-methyl-5'-thioadenosine</name>
        <dbReference type="ChEBI" id="CHEBI:17509"/>
    </ligand>
</feature>
<feature type="binding site" evidence="1">
    <location>
        <position position="86"/>
    </location>
    <ligand>
        <name>spermidine</name>
        <dbReference type="ChEBI" id="CHEBI:57834"/>
    </ligand>
</feature>
<feature type="binding site" evidence="1">
    <location>
        <position position="106"/>
    </location>
    <ligand>
        <name>S-methyl-5'-thioadenosine</name>
        <dbReference type="ChEBI" id="CHEBI:17509"/>
    </ligand>
</feature>
<feature type="binding site" evidence="1">
    <location>
        <begin position="137"/>
        <end position="138"/>
    </location>
    <ligand>
        <name>S-methyl-5'-thioadenosine</name>
        <dbReference type="ChEBI" id="CHEBI:17509"/>
    </ligand>
</feature>
<feature type="binding site" evidence="1">
    <location>
        <begin position="155"/>
        <end position="158"/>
    </location>
    <ligand>
        <name>spermidine</name>
        <dbReference type="ChEBI" id="CHEBI:57834"/>
    </ligand>
</feature>